<protein>
    <recommendedName>
        <fullName>Phosphoglycerate kinase 1</fullName>
        <ecNumber evidence="2">2.7.11.1</ecNumber>
        <ecNumber evidence="2">2.7.2.3</ecNumber>
    </recommendedName>
</protein>
<accession>P00559</accession>
<comment type="function">
    <text evidence="2">Catalyzes one of the two ATP producing reactions in the glycolytic pathway via the reversible conversion of 1,3-diphosphoglycerate to 3-phosphoglycerate. Both L- and D- forms of purine and pyrimidine nucleotides can be used as substrates, but the activity is much lower on pyrimidines. In addition to its role as a glycolytic enzyme, it seems that PGK-1 acts as a polymerase alpha cofactor protein (primer recognition protein). Acts as a protein kinase when localized to the mitochondrion where it phosphorylates pyruvate dehydrogenase kinase PDK1 to inhibit pyruvate dehydrogenase complex activity and suppress the formation of acetyl-coenzyme A from pyruvate, and consequently inhibit oxidative phosphorylation and promote glycolysis. May play a role in sperm motility.</text>
</comment>
<comment type="catalytic activity">
    <reaction evidence="2">
        <text>(2R)-3-phosphoglycerate + ATP = (2R)-3-phospho-glyceroyl phosphate + ADP</text>
        <dbReference type="Rhea" id="RHEA:14801"/>
        <dbReference type="ChEBI" id="CHEBI:30616"/>
        <dbReference type="ChEBI" id="CHEBI:57604"/>
        <dbReference type="ChEBI" id="CHEBI:58272"/>
        <dbReference type="ChEBI" id="CHEBI:456216"/>
        <dbReference type="EC" id="2.7.2.3"/>
    </reaction>
</comment>
<comment type="catalytic activity">
    <reaction evidence="2">
        <text>L-seryl-[protein] + ATP = O-phospho-L-seryl-[protein] + ADP + H(+)</text>
        <dbReference type="Rhea" id="RHEA:17989"/>
        <dbReference type="Rhea" id="RHEA-COMP:9863"/>
        <dbReference type="Rhea" id="RHEA-COMP:11604"/>
        <dbReference type="ChEBI" id="CHEBI:15378"/>
        <dbReference type="ChEBI" id="CHEBI:29999"/>
        <dbReference type="ChEBI" id="CHEBI:30616"/>
        <dbReference type="ChEBI" id="CHEBI:83421"/>
        <dbReference type="ChEBI" id="CHEBI:456216"/>
        <dbReference type="EC" id="2.7.11.1"/>
    </reaction>
</comment>
<comment type="cofactor">
    <cofactor evidence="2">
        <name>Mg(2+)</name>
        <dbReference type="ChEBI" id="CHEBI:18420"/>
    </cofactor>
</comment>
<comment type="pathway">
    <text evidence="2">Carbohydrate degradation; glycolysis; pyruvate from D-glyceraldehyde 3-phosphate: step 2/5.</text>
</comment>
<comment type="subunit">
    <text evidence="2">Monomer. Interacts with kinase MAPK1/ERK2; the interaction is direct, occurs under hypoxic conditions, and promotes its interaction with PIN1. Interacts with peptidyl-prolyl cis-trans isomerase PIN1; the interaction is direct, occurs under hypoxic conditions, and targets the protein to the mitochondrion by promoting interactions with the TOM complex. Interacts with mitochondrial circRNA mcPGK1 (via its 2nd stem-loop); the interaction is direct and targets the protein to the mitochondrion by promoting interactions with the TOM complex. Interacts with pyruvate dehydrogenase kinase PDK1; the interaction is direct, occurs under hypoxic conditions and leads to PDK1-mediated inhibition of pyruvate dehydrogenase complex activity.</text>
</comment>
<comment type="subcellular location">
    <subcellularLocation>
        <location evidence="2">Cytoplasm</location>
        <location evidence="2">Cytosol</location>
    </subcellularLocation>
    <subcellularLocation>
        <location evidence="2">Mitochondrion matrix</location>
    </subcellularLocation>
    <text evidence="2">Hypoxic conditions promote mitochondrial targeting. Targeted to the mitochondrion following phosphorylation by MAPK1/ERK2, cis-trans isomerization by PIN1, and binding to mitochondrial circRNA mcPGK1.</text>
</comment>
<comment type="PTM">
    <text evidence="2">Phosphorylated at Ser-203 by MAPK1/ERK2 under hypoxic conditions, which promotes its mitochondrial targeting.</text>
</comment>
<comment type="similarity">
    <text evidence="6">Belongs to the phosphoglycerate kinase family.</text>
</comment>
<organism>
    <name type="scientific">Equus caballus</name>
    <name type="common">Horse</name>
    <dbReference type="NCBI Taxonomy" id="9796"/>
    <lineage>
        <taxon>Eukaryota</taxon>
        <taxon>Metazoa</taxon>
        <taxon>Chordata</taxon>
        <taxon>Craniata</taxon>
        <taxon>Vertebrata</taxon>
        <taxon>Euteleostomi</taxon>
        <taxon>Mammalia</taxon>
        <taxon>Eutheria</taxon>
        <taxon>Laurasiatheria</taxon>
        <taxon>Perissodactyla</taxon>
        <taxon>Equidae</taxon>
        <taxon>Equus</taxon>
    </lineage>
</organism>
<proteinExistence type="evidence at protein level"/>
<feature type="initiator methionine" description="Removed" evidence="2 5">
    <location>
        <position position="1"/>
    </location>
</feature>
<feature type="chain" id="PRO_0000145829" description="Phosphoglycerate kinase 1">
    <location>
        <begin position="2"/>
        <end position="417"/>
    </location>
</feature>
<feature type="region of interest" description="Globular domain-1">
    <location>
        <begin position="2"/>
        <end position="186"/>
    </location>
</feature>
<feature type="region of interest" description="Mitochondrial targeting region exposed following cis-trans isomerization by PIN1 and recognized by the TOM complex for mitochondrial translocation of the protein" evidence="2">
    <location>
        <begin position="38"/>
        <end position="43"/>
    </location>
</feature>
<feature type="region of interest" description="Linker">
    <location>
        <begin position="187"/>
        <end position="190"/>
    </location>
</feature>
<feature type="region of interest" description="Globular domain-2">
    <location>
        <begin position="191"/>
        <end position="417"/>
    </location>
</feature>
<feature type="region of interest" description="Associated with globular domain 1">
    <location>
        <begin position="406"/>
        <end position="417"/>
    </location>
</feature>
<feature type="binding site" evidence="2">
    <location>
        <position position="23"/>
    </location>
    <ligand>
        <name>(2R)-3-phosphoglycerate</name>
        <dbReference type="ChEBI" id="CHEBI:58272"/>
    </ligand>
</feature>
<feature type="binding site" evidence="4">
    <location>
        <position position="24"/>
    </location>
    <ligand>
        <name>(2R)-3-phosphoglycerate</name>
        <dbReference type="ChEBI" id="CHEBI:58272"/>
    </ligand>
</feature>
<feature type="binding site" evidence="2">
    <location>
        <position position="25"/>
    </location>
    <ligand>
        <name>(2R)-3-phosphoglycerate</name>
        <dbReference type="ChEBI" id="CHEBI:58272"/>
    </ligand>
</feature>
<feature type="binding site" evidence="4">
    <location>
        <position position="26"/>
    </location>
    <ligand>
        <name>(2R)-3-phosphoglycerate</name>
        <dbReference type="ChEBI" id="CHEBI:58272"/>
    </ligand>
</feature>
<feature type="binding site" evidence="2">
    <location>
        <position position="38"/>
    </location>
    <ligand>
        <name>(2R)-3-phosphoglycerate</name>
        <dbReference type="ChEBI" id="CHEBI:58272"/>
    </ligand>
</feature>
<feature type="binding site" evidence="4">
    <location>
        <position position="39"/>
    </location>
    <ligand>
        <name>(2R)-3-phosphoglycerate</name>
        <dbReference type="ChEBI" id="CHEBI:58272"/>
    </ligand>
</feature>
<feature type="binding site" evidence="2">
    <location>
        <position position="62"/>
    </location>
    <ligand>
        <name>(2R)-3-phosphoglycerate</name>
        <dbReference type="ChEBI" id="CHEBI:58272"/>
    </ligand>
</feature>
<feature type="binding site" evidence="4">
    <location>
        <position position="63"/>
    </location>
    <ligand>
        <name>(2R)-3-phosphoglycerate</name>
        <dbReference type="ChEBI" id="CHEBI:58272"/>
    </ligand>
</feature>
<feature type="binding site" evidence="2">
    <location>
        <position position="65"/>
    </location>
    <ligand>
        <name>(2R)-3-phosphoglycerate</name>
        <dbReference type="ChEBI" id="CHEBI:58272"/>
    </ligand>
</feature>
<feature type="binding site" evidence="4">
    <location>
        <position position="66"/>
    </location>
    <ligand>
        <name>(2R)-3-phosphoglycerate</name>
        <dbReference type="ChEBI" id="CHEBI:58272"/>
    </ligand>
</feature>
<feature type="binding site" evidence="2">
    <location>
        <position position="122"/>
    </location>
    <ligand>
        <name>(2R)-3-phosphoglycerate</name>
        <dbReference type="ChEBI" id="CHEBI:58272"/>
    </ligand>
</feature>
<feature type="binding site" evidence="4">
    <location>
        <position position="123"/>
    </location>
    <ligand>
        <name>(2R)-3-phosphoglycerate</name>
        <dbReference type="ChEBI" id="CHEBI:58272"/>
    </ligand>
</feature>
<feature type="binding site" evidence="2">
    <location>
        <position position="170"/>
    </location>
    <ligand>
        <name>(2R)-3-phosphoglycerate</name>
        <dbReference type="ChEBI" id="CHEBI:58272"/>
    </ligand>
</feature>
<feature type="binding site" evidence="4">
    <location>
        <position position="171"/>
    </location>
    <ligand>
        <name>(2R)-3-phosphoglycerate</name>
        <dbReference type="ChEBI" id="CHEBI:58272"/>
    </ligand>
</feature>
<feature type="binding site" evidence="2">
    <location>
        <position position="214"/>
    </location>
    <ligand>
        <name>ADP</name>
        <dbReference type="ChEBI" id="CHEBI:456216"/>
    </ligand>
</feature>
<feature type="binding site" evidence="2">
    <location>
        <position position="214"/>
    </location>
    <ligand>
        <name>CDP</name>
        <dbReference type="ChEBI" id="CHEBI:58069"/>
    </ligand>
</feature>
<feature type="binding site" evidence="4">
    <location>
        <position position="215"/>
    </location>
    <ligand>
        <name>AMP</name>
        <dbReference type="ChEBI" id="CHEBI:456215"/>
    </ligand>
</feature>
<feature type="binding site" evidence="4">
    <location>
        <position position="215"/>
    </location>
    <ligand>
        <name>ATP</name>
        <dbReference type="ChEBI" id="CHEBI:30616"/>
    </ligand>
</feature>
<feature type="binding site" evidence="2">
    <location>
        <position position="215"/>
    </location>
    <ligand>
        <name>Mg(2+)</name>
        <dbReference type="ChEBI" id="CHEBI:18420"/>
    </ligand>
</feature>
<feature type="binding site" evidence="4">
    <location>
        <position position="216"/>
    </location>
    <ligand>
        <name>AMP</name>
        <dbReference type="ChEBI" id="CHEBI:456215"/>
    </ligand>
</feature>
<feature type="binding site" evidence="2">
    <location>
        <position position="218"/>
    </location>
    <ligand>
        <name>Mg(2+)</name>
        <dbReference type="ChEBI" id="CHEBI:18420"/>
    </ligand>
</feature>
<feature type="binding site" evidence="2">
    <location>
        <position position="219"/>
    </location>
    <ligand>
        <name>CDP</name>
        <dbReference type="ChEBI" id="CHEBI:58069"/>
    </ligand>
</feature>
<feature type="binding site" evidence="2">
    <location>
        <position position="219"/>
    </location>
    <ligand>
        <name>Mg(2+)</name>
        <dbReference type="ChEBI" id="CHEBI:18420"/>
    </ligand>
</feature>
<feature type="binding site" evidence="4">
    <location>
        <position position="220"/>
    </location>
    <ligand>
        <name>AMP</name>
        <dbReference type="ChEBI" id="CHEBI:456215"/>
    </ligand>
</feature>
<feature type="binding site" evidence="4">
    <location>
        <position position="220"/>
    </location>
    <ligand>
        <name>ATP</name>
        <dbReference type="ChEBI" id="CHEBI:30616"/>
    </ligand>
</feature>
<feature type="binding site" evidence="2">
    <location>
        <position position="238"/>
    </location>
    <ligand>
        <name>ADP</name>
        <dbReference type="ChEBI" id="CHEBI:456216"/>
    </ligand>
</feature>
<feature type="binding site" evidence="2">
    <location>
        <position position="238"/>
    </location>
    <ligand>
        <name>CDP</name>
        <dbReference type="ChEBI" id="CHEBI:58069"/>
    </ligand>
</feature>
<feature type="binding site" evidence="4">
    <location>
        <position position="239"/>
    </location>
    <ligand>
        <name>AMP</name>
        <dbReference type="ChEBI" id="CHEBI:456215"/>
    </ligand>
</feature>
<feature type="binding site" evidence="4">
    <location>
        <position position="239"/>
    </location>
    <ligand>
        <name>ATP</name>
        <dbReference type="ChEBI" id="CHEBI:30616"/>
    </ligand>
</feature>
<feature type="binding site" evidence="4">
    <location>
        <position position="313"/>
    </location>
    <ligand>
        <name>AMP</name>
        <dbReference type="ChEBI" id="CHEBI:456215"/>
    </ligand>
</feature>
<feature type="binding site" evidence="4">
    <location>
        <position position="313"/>
    </location>
    <ligand>
        <name>ATP</name>
        <dbReference type="ChEBI" id="CHEBI:30616"/>
    </ligand>
</feature>
<feature type="binding site" evidence="2">
    <location>
        <position position="338"/>
    </location>
    <ligand>
        <name>CDP</name>
        <dbReference type="ChEBI" id="CHEBI:58069"/>
    </ligand>
</feature>
<feature type="binding site" evidence="2">
    <location>
        <position position="340"/>
    </location>
    <ligand>
        <name>CDP</name>
        <dbReference type="ChEBI" id="CHEBI:58069"/>
    </ligand>
</feature>
<feature type="binding site" evidence="2">
    <location>
        <position position="343"/>
    </location>
    <ligand>
        <name>ADP</name>
        <dbReference type="ChEBI" id="CHEBI:456216"/>
    </ligand>
</feature>
<feature type="binding site" evidence="2">
    <location>
        <position position="343"/>
    </location>
    <ligand>
        <name>CDP</name>
        <dbReference type="ChEBI" id="CHEBI:58069"/>
    </ligand>
</feature>
<feature type="binding site" evidence="4">
    <location>
        <position position="344"/>
    </location>
    <ligand>
        <name>AMP</name>
        <dbReference type="ChEBI" id="CHEBI:456215"/>
    </ligand>
</feature>
<feature type="binding site" evidence="4">
    <location>
        <position position="344"/>
    </location>
    <ligand>
        <name>ATP</name>
        <dbReference type="ChEBI" id="CHEBI:30616"/>
    </ligand>
</feature>
<feature type="binding site" evidence="4">
    <location>
        <position position="375"/>
    </location>
    <ligand>
        <name>ATP</name>
        <dbReference type="ChEBI" id="CHEBI:30616"/>
    </ligand>
</feature>
<feature type="binding site" evidence="4">
    <location>
        <position position="375"/>
    </location>
    <ligand>
        <name>Mg(2+)</name>
        <dbReference type="ChEBI" id="CHEBI:18420"/>
    </ligand>
</feature>
<feature type="binding site" evidence="4">
    <location>
        <position position="376"/>
    </location>
    <ligand>
        <name>ATP</name>
        <dbReference type="ChEBI" id="CHEBI:30616"/>
    </ligand>
</feature>
<feature type="modified residue" description="N-acetylserine" evidence="2">
    <location>
        <position position="2"/>
    </location>
</feature>
<feature type="modified residue" description="Phosphoserine" evidence="2">
    <location>
        <position position="2"/>
    </location>
</feature>
<feature type="modified residue" description="Phosphoserine" evidence="2">
    <location>
        <position position="4"/>
    </location>
</feature>
<feature type="modified residue" description="N6-succinyllysine" evidence="3">
    <location>
        <position position="6"/>
    </location>
</feature>
<feature type="modified residue" description="N6-acetyllysine" evidence="2">
    <location>
        <position position="11"/>
    </location>
</feature>
<feature type="modified residue" description="N6-acetyllysine; alternate" evidence="2">
    <location>
        <position position="48"/>
    </location>
</feature>
<feature type="modified residue" description="N6-succinyllysine; alternate" evidence="3">
    <location>
        <position position="48"/>
    </location>
</feature>
<feature type="modified residue" description="N6-acetyllysine" evidence="2">
    <location>
        <position position="75"/>
    </location>
</feature>
<feature type="modified residue" description="Phosphotyrosine" evidence="3">
    <location>
        <position position="76"/>
    </location>
</feature>
<feature type="modified residue" description="N6-acetyllysine" evidence="2">
    <location>
        <position position="86"/>
    </location>
</feature>
<feature type="modified residue" description="N6-acetyllysine" evidence="3">
    <location>
        <position position="91"/>
    </location>
</feature>
<feature type="modified residue" description="N6-(2-hydroxyisobutyryl)lysine; alternate" evidence="2">
    <location>
        <position position="97"/>
    </location>
</feature>
<feature type="modified residue" description="N6-acetyllysine; alternate" evidence="2">
    <location>
        <position position="97"/>
    </location>
</feature>
<feature type="modified residue" description="N6-acetyllysine; alternate" evidence="2">
    <location>
        <position position="131"/>
    </location>
</feature>
<feature type="modified residue" description="N6-malonyllysine; alternate" evidence="1">
    <location>
        <position position="131"/>
    </location>
</feature>
<feature type="modified residue" description="N6-acetyllysine" evidence="2">
    <location>
        <position position="146"/>
    </location>
</feature>
<feature type="modified residue" description="N6-succinyllysine" evidence="3">
    <location>
        <position position="191"/>
    </location>
</feature>
<feature type="modified residue" description="Phosphotyrosine" evidence="2">
    <location>
        <position position="196"/>
    </location>
</feature>
<feature type="modified residue" description="N6-acetyllysine" evidence="2">
    <location>
        <position position="199"/>
    </location>
</feature>
<feature type="modified residue" description="Phosphoserine" evidence="2">
    <location>
        <position position="203"/>
    </location>
</feature>
<feature type="modified residue" description="N6-(2-hydroxyisobutyryl)lysine" evidence="2">
    <location>
        <position position="216"/>
    </location>
</feature>
<feature type="modified residue" description="N6-(2-hydroxyisobutyryl)lysine" evidence="2">
    <location>
        <position position="220"/>
    </location>
</feature>
<feature type="modified residue" description="N6-acetyllysine" evidence="2">
    <location>
        <position position="267"/>
    </location>
</feature>
<feature type="modified residue" description="N6-acetyllysine" evidence="2">
    <location>
        <position position="291"/>
    </location>
</feature>
<feature type="modified residue" description="N6-(2-hydroxyisobutyryl)lysine" evidence="2">
    <location>
        <position position="323"/>
    </location>
</feature>
<feature type="modified residue" description="N6-acetyllysine" evidence="3">
    <location>
        <position position="361"/>
    </location>
</feature>
<sequence length="417" mass="44603">MSLSNKLTLDKLNVKGKRVVMRVDFNVPMKNNQITNNQRIKAAVPSIKFCLDNGAKSVVLMSHLGRPDVGPMPDKYSLQPVAVELKSLLGKDVLFLKDCVGPEVEKACADPAAGSVILLENLRFHVEEEGKGKDASGNKVKAEPAKIETFRASLSKLGDVYVNDAFGTAHRAHSSMVGVNLPQKAGGFLMKKELNYFAKALESPERPFLAILGGAKVADKIQLINNMLDKVNEMIIGGGMAFTFLKVLNNMEIGTSLFDEEGAKIVKNLMSKAEKNGVKITLPVDFVTADKFDENAKTGQATVASGIPAGWMGLDCGTESSKKYAEAVARAKQIVWNGPVGVFEWEAFARGTKALMDEVVKATSRGCITIIGGGDTATCCAKWNTEDKVSHVSTGGGASLELLEGKVLPGVDALSNV</sequence>
<name>PGK1_HORSE</name>
<evidence type="ECO:0000250" key="1"/>
<evidence type="ECO:0000250" key="2">
    <source>
        <dbReference type="UniProtKB" id="P00558"/>
    </source>
</evidence>
<evidence type="ECO:0000250" key="3">
    <source>
        <dbReference type="UniProtKB" id="P09411"/>
    </source>
</evidence>
<evidence type="ECO:0000250" key="4">
    <source>
        <dbReference type="UniProtKB" id="Q7SIB7"/>
    </source>
</evidence>
<evidence type="ECO:0000269" key="5">
    <source>
    </source>
</evidence>
<evidence type="ECO:0000305" key="6"/>
<gene>
    <name type="primary">PGK1</name>
    <name type="synonym">PGK</name>
</gene>
<reference key="1">
    <citation type="journal article" date="1981" name="J. Biol. Chem.">
        <title>Primary structure of 3-phosphoglycerate kinase from horse muscle. II. Amino acid sequence of cyanogen bromide peptides CB1-CB4 and CB6-CB14, sequence of methionine-containing regions, and complete sequence of the enzyme.</title>
        <authorList>
            <person name="Merrett M."/>
        </authorList>
    </citation>
    <scope>PROTEIN SEQUENCE OF 2-417</scope>
    <scope>SUBCELLULAR LOCATION</scope>
    <source>
        <tissue>Muscle</tissue>
    </source>
</reference>
<reference key="2">
    <citation type="journal article" date="1979" name="Nature">
        <title>Sequence, structure and activity of phosphoglycerate kinase: a possible hinge-bending enzyme.</title>
        <authorList>
            <person name="Banks R.D."/>
            <person name="Blake C.C.F."/>
            <person name="Evans P.R."/>
            <person name="Haser R."/>
            <person name="Rice D.W."/>
            <person name="Hardy G.W."/>
            <person name="Merrett M."/>
            <person name="Phillips A.W."/>
        </authorList>
    </citation>
    <scope>X-RAY CRYSTALLOGRAPHY (2.5 ANGSTROMS)</scope>
    <source>
        <tissue>Muscle</tissue>
    </source>
</reference>
<dbReference type="EC" id="2.7.11.1" evidence="2"/>
<dbReference type="EC" id="2.7.2.3" evidence="2"/>
<dbReference type="PIR" id="A92292">
    <property type="entry name" value="KIHOG"/>
</dbReference>
<dbReference type="PDB" id="2PGK">
    <property type="method" value="X-ray"/>
    <property type="resolution" value="3.00 A"/>
    <property type="chains" value="A=-"/>
</dbReference>
<dbReference type="PDBsum" id="2PGK"/>
<dbReference type="SMR" id="P00559"/>
<dbReference type="FunCoup" id="P00559">
    <property type="interactions" value="1001"/>
</dbReference>
<dbReference type="STRING" id="9796.ENSECAP00000012929"/>
<dbReference type="PaxDb" id="9796-ENSECAP00000012929"/>
<dbReference type="PeptideAtlas" id="P00559"/>
<dbReference type="InParanoid" id="P00559"/>
<dbReference type="SABIO-RK" id="P00559"/>
<dbReference type="UniPathway" id="UPA00109">
    <property type="reaction ID" value="UER00185"/>
</dbReference>
<dbReference type="Proteomes" id="UP000002281">
    <property type="component" value="Unplaced"/>
</dbReference>
<dbReference type="GO" id="GO:0005829">
    <property type="term" value="C:cytosol"/>
    <property type="evidence" value="ECO:0000250"/>
    <property type="project" value="UniProtKB"/>
</dbReference>
<dbReference type="GO" id="GO:0005759">
    <property type="term" value="C:mitochondrial matrix"/>
    <property type="evidence" value="ECO:0000250"/>
    <property type="project" value="UniProtKB"/>
</dbReference>
<dbReference type="GO" id="GO:0043531">
    <property type="term" value="F:ADP binding"/>
    <property type="evidence" value="ECO:0000318"/>
    <property type="project" value="GO_Central"/>
</dbReference>
<dbReference type="GO" id="GO:0005524">
    <property type="term" value="F:ATP binding"/>
    <property type="evidence" value="ECO:0000314"/>
    <property type="project" value="UniProtKB"/>
</dbReference>
<dbReference type="GO" id="GO:0046872">
    <property type="term" value="F:metal ion binding"/>
    <property type="evidence" value="ECO:0007669"/>
    <property type="project" value="UniProtKB-KW"/>
</dbReference>
<dbReference type="GO" id="GO:0004618">
    <property type="term" value="F:phosphoglycerate kinase activity"/>
    <property type="evidence" value="ECO:0000250"/>
    <property type="project" value="UniProtKB"/>
</dbReference>
<dbReference type="GO" id="GO:0106310">
    <property type="term" value="F:protein serine kinase activity"/>
    <property type="evidence" value="ECO:0007669"/>
    <property type="project" value="RHEA"/>
</dbReference>
<dbReference type="GO" id="GO:0006094">
    <property type="term" value="P:gluconeogenesis"/>
    <property type="evidence" value="ECO:0000318"/>
    <property type="project" value="GO_Central"/>
</dbReference>
<dbReference type="GO" id="GO:0006096">
    <property type="term" value="P:glycolytic process"/>
    <property type="evidence" value="ECO:0000318"/>
    <property type="project" value="GO_Central"/>
</dbReference>
<dbReference type="GO" id="GO:0016310">
    <property type="term" value="P:phosphorylation"/>
    <property type="evidence" value="ECO:0000303"/>
    <property type="project" value="UniProtKB"/>
</dbReference>
<dbReference type="CDD" id="cd00318">
    <property type="entry name" value="Phosphoglycerate_kinase"/>
    <property type="match status" value="1"/>
</dbReference>
<dbReference type="FunFam" id="3.40.50.1260:FF:000019">
    <property type="entry name" value="Phosphoglycerate kinase 1"/>
    <property type="match status" value="1"/>
</dbReference>
<dbReference type="FunFam" id="3.40.50.1260:FF:000031">
    <property type="entry name" value="Phosphoglycerate kinase 1"/>
    <property type="match status" value="1"/>
</dbReference>
<dbReference type="Gene3D" id="3.40.50.1260">
    <property type="entry name" value="Phosphoglycerate kinase, N-terminal domain"/>
    <property type="match status" value="3"/>
</dbReference>
<dbReference type="HAMAP" id="MF_00145">
    <property type="entry name" value="Phosphoglyc_kinase"/>
    <property type="match status" value="1"/>
</dbReference>
<dbReference type="InterPro" id="IPR001576">
    <property type="entry name" value="Phosphoglycerate_kinase"/>
</dbReference>
<dbReference type="InterPro" id="IPR015911">
    <property type="entry name" value="Phosphoglycerate_kinase_CS"/>
</dbReference>
<dbReference type="InterPro" id="IPR015824">
    <property type="entry name" value="Phosphoglycerate_kinase_N"/>
</dbReference>
<dbReference type="InterPro" id="IPR036043">
    <property type="entry name" value="Phosphoglycerate_kinase_sf"/>
</dbReference>
<dbReference type="PANTHER" id="PTHR11406">
    <property type="entry name" value="PHOSPHOGLYCERATE KINASE"/>
    <property type="match status" value="1"/>
</dbReference>
<dbReference type="PANTHER" id="PTHR11406:SF14">
    <property type="entry name" value="PHOSPHOGLYCERATE KINASE 1"/>
    <property type="match status" value="1"/>
</dbReference>
<dbReference type="Pfam" id="PF00162">
    <property type="entry name" value="PGK"/>
    <property type="match status" value="1"/>
</dbReference>
<dbReference type="PIRSF" id="PIRSF000724">
    <property type="entry name" value="Pgk"/>
    <property type="match status" value="1"/>
</dbReference>
<dbReference type="PRINTS" id="PR00477">
    <property type="entry name" value="PHGLYCKINASE"/>
</dbReference>
<dbReference type="SUPFAM" id="SSF53748">
    <property type="entry name" value="Phosphoglycerate kinase"/>
    <property type="match status" value="1"/>
</dbReference>
<dbReference type="PROSITE" id="PS00111">
    <property type="entry name" value="PGLYCERATE_KINASE"/>
    <property type="match status" value="1"/>
</dbReference>
<keyword id="KW-0002">3D-structure</keyword>
<keyword id="KW-0007">Acetylation</keyword>
<keyword id="KW-0067">ATP-binding</keyword>
<keyword id="KW-0963">Cytoplasm</keyword>
<keyword id="KW-0903">Direct protein sequencing</keyword>
<keyword id="KW-0324">Glycolysis</keyword>
<keyword id="KW-0379">Hydroxylation</keyword>
<keyword id="KW-0418">Kinase</keyword>
<keyword id="KW-0460">Magnesium</keyword>
<keyword id="KW-0479">Metal-binding</keyword>
<keyword id="KW-0496">Mitochondrion</keyword>
<keyword id="KW-0547">Nucleotide-binding</keyword>
<keyword id="KW-0597">Phosphoprotein</keyword>
<keyword id="KW-1185">Reference proteome</keyword>
<keyword id="KW-0808">Transferase</keyword>